<dbReference type="EC" id="1.-.-.-" evidence="6"/>
<dbReference type="EMBL" id="JQ708194">
    <property type="protein sequence ID" value="AGC83572.1"/>
    <property type="molecule type" value="Genomic_DNA"/>
</dbReference>
<dbReference type="SMR" id="L7WRQ4"/>
<dbReference type="VEuPathDB" id="FungiDB:ASPVEDRAFT_29909"/>
<dbReference type="GO" id="GO:0005634">
    <property type="term" value="C:nucleus"/>
    <property type="evidence" value="ECO:0007669"/>
    <property type="project" value="TreeGrafter"/>
</dbReference>
<dbReference type="GO" id="GO:0016491">
    <property type="term" value="F:oxidoreductase activity"/>
    <property type="evidence" value="ECO:0007669"/>
    <property type="project" value="UniProtKB-KW"/>
</dbReference>
<dbReference type="GO" id="GO:0009820">
    <property type="term" value="P:alkaloid metabolic process"/>
    <property type="evidence" value="ECO:0007669"/>
    <property type="project" value="UniProtKB-KW"/>
</dbReference>
<dbReference type="CDD" id="cd05251">
    <property type="entry name" value="NmrA_like_SDR_a"/>
    <property type="match status" value="1"/>
</dbReference>
<dbReference type="Gene3D" id="3.40.50.720">
    <property type="entry name" value="NAD(P)-binding Rossmann-like Domain"/>
    <property type="match status" value="1"/>
</dbReference>
<dbReference type="Gene3D" id="3.90.25.10">
    <property type="entry name" value="UDP-galactose 4-epimerase, domain 1"/>
    <property type="match status" value="1"/>
</dbReference>
<dbReference type="InterPro" id="IPR036291">
    <property type="entry name" value="NAD(P)-bd_dom_sf"/>
</dbReference>
<dbReference type="InterPro" id="IPR008030">
    <property type="entry name" value="NmrA-like"/>
</dbReference>
<dbReference type="InterPro" id="IPR051164">
    <property type="entry name" value="NmrA-like_oxidored"/>
</dbReference>
<dbReference type="PANTHER" id="PTHR42748">
    <property type="entry name" value="NITROGEN METABOLITE REPRESSION PROTEIN NMRA FAMILY MEMBER"/>
    <property type="match status" value="1"/>
</dbReference>
<dbReference type="PANTHER" id="PTHR42748:SF7">
    <property type="entry name" value="NMRA LIKE REDOX SENSOR 1-RELATED"/>
    <property type="match status" value="1"/>
</dbReference>
<dbReference type="Pfam" id="PF05368">
    <property type="entry name" value="NmrA"/>
    <property type="match status" value="1"/>
</dbReference>
<dbReference type="SUPFAM" id="SSF51735">
    <property type="entry name" value="NAD(P)-binding Rossmann-fold domains"/>
    <property type="match status" value="1"/>
</dbReference>
<evidence type="ECO:0000250" key="1">
    <source>
        <dbReference type="UniProtKB" id="Q9HBL8"/>
    </source>
</evidence>
<evidence type="ECO:0000269" key="2">
    <source>
    </source>
</evidence>
<evidence type="ECO:0000269" key="3">
    <source>
    </source>
</evidence>
<evidence type="ECO:0000269" key="4">
    <source>
    </source>
</evidence>
<evidence type="ECO:0000303" key="5">
    <source>
    </source>
</evidence>
<evidence type="ECO:0000305" key="6"/>
<evidence type="ECO:0000305" key="7">
    <source>
    </source>
</evidence>
<accession>L7WRQ4</accession>
<gene>
    <name evidence="5" type="primary">notA'</name>
</gene>
<proteinExistence type="evidence at protein level"/>
<protein>
    <recommendedName>
        <fullName evidence="5">NmrA-like family domain-containing oxidoreductase notA'</fullName>
        <ecNumber evidence="6">1.-.-.-</ecNumber>
    </recommendedName>
    <alternativeName>
        <fullName evidence="5">Notoamide biosynthesis cluster protein A'</fullName>
    </alternativeName>
</protein>
<comment type="function">
    <text evidence="3 4 7">NmrA-like family domain-containing oxidoreductase; part of the gene cluster that mediates the biosynthesis of notoamide, a fungal indole alkaloid that belongs to a family of natural products containing a characteristic bicyclo[2.2.2]diazaoctane core (PubMed:23213353). The first step of notoamide biosynthesis involves coupling of L-proline and L-tryptophan by the bimodular NRPS notE', to produce cyclo-L-tryptophan-L-proline called brevianamide F (Probable). The reverse prenyltransferase notF' then acts as a deoxybrevianamide E synthase and converts brevianamide F to deoxybrevianamide E via reverse prenylation at C-2 of the indole ring leading to the bicyclo[2.2.2]diazaoctane core (Probable) (PubMed:22660767). Deoxybrevianamide E is further hydroxylated at C-6 of the indole ring, likely catalyzed by the cytochrome P450 monooxygenase notG', to yield 6-hydroxy-deoxybrevianamide E (Probable). 6-hydroxy-deoxybrevianamide E is a specific substrate of the prenyltransferase notC' for normal prenylation at C-7 to produce 6-hydroxy-7-prenyl-deoxybrevianamide, also called notoamide S (Probable). As the proposed pivotal branching point in notoamide biosynthesis, notoamide S can be diverted to notoamide E through an oxidative pyran ring closure putatively catalyzed by either notH' cytochrome P450 monooxygenase or the notD' FAD-linked oxidoreductase (Probable). This step would be followed by an indole 2,3-epoxidation-initiated pinacol-like rearrangement catalyzed by the notB' FAD-dependent monooxygenase leading to the formation of notoamide C and notoamide D (Probable). On the other hand notoamide S is converted to notoamide T by notH' (or notD'), a bifunctional oxidase that also functions as the intramolecular Diels-Alderase responsible for generation of (-)-notoamide T (Probable). To generate antipodal (+)-notoaminide T, notH (or notD) in Aspergillus strain MF297-2 is expected to catalyze a Diels-Alder reaction leading to the opposite stereochemistry (Probable). The remaining oxidoreductase notD' (or notH') likely catalyzes the oxidative pyran ring formation to yield (-)-stephacidin A (Probable). The FAD-dependent monooxygenase notI' is highly similar to notB' and is predicted to catalyze a similar conversion from (-)-stephacidin A to (+)-notoamide B via the 2,3-epoxidation of (-)-stephacidin A followed by a pinacol-type rearrangement (Probable). Finally, it remains unclear which enzyme could be responsible for the final hydroxylation steps leading to notoamide A and sclerotiamide (Probable).</text>
</comment>
<comment type="biotechnology">
    <text evidence="2">Notoamides have been shown to exhibit antitumoral activities (PubMed:17304611). Notoamides A-C show moderate cytotoxicity against HeLa and L1210 cells with IC(50) values in the range of 22-52 mg/ml, but the IC(50) value of notoamide D is greater than 100 mg/ml (PubMed:17304611). Moreover, notoamide C induces G2/M-cell cycle arrest at a concentration of 6.3 mg/ml (PubMed:17304611).</text>
</comment>
<comment type="similarity">
    <text evidence="6">Belongs to the NmrA-type oxidoreductase family.</text>
</comment>
<organism>
    <name type="scientific">Aspergillus versicolor</name>
    <dbReference type="NCBI Taxonomy" id="46472"/>
    <lineage>
        <taxon>Eukaryota</taxon>
        <taxon>Fungi</taxon>
        <taxon>Dikarya</taxon>
        <taxon>Ascomycota</taxon>
        <taxon>Pezizomycotina</taxon>
        <taxon>Eurotiomycetes</taxon>
        <taxon>Eurotiomycetidae</taxon>
        <taxon>Eurotiales</taxon>
        <taxon>Aspergillaceae</taxon>
        <taxon>Aspergillus</taxon>
        <taxon>Aspergillus subgen. Nidulantes</taxon>
    </lineage>
</organism>
<feature type="chain" id="PRO_0000448814" description="NmrA-like family domain-containing oxidoreductase notA'">
    <location>
        <begin position="1"/>
        <end position="357"/>
    </location>
</feature>
<feature type="binding site" evidence="1">
    <location>
        <begin position="13"/>
        <end position="18"/>
    </location>
    <ligand>
        <name>NADP(+)</name>
        <dbReference type="ChEBI" id="CHEBI:58349"/>
    </ligand>
</feature>
<feature type="binding site" evidence="1">
    <location>
        <begin position="39"/>
        <end position="43"/>
    </location>
    <ligand>
        <name>NADP(+)</name>
        <dbReference type="ChEBI" id="CHEBI:58349"/>
    </ligand>
</feature>
<feature type="binding site" evidence="1">
    <location>
        <begin position="60"/>
        <end position="61"/>
    </location>
    <ligand>
        <name>NADP(+)</name>
        <dbReference type="ChEBI" id="CHEBI:58349"/>
    </ligand>
</feature>
<feature type="binding site" evidence="1">
    <location>
        <begin position="81"/>
        <end position="83"/>
    </location>
    <ligand>
        <name>NADP(+)</name>
        <dbReference type="ChEBI" id="CHEBI:58349"/>
    </ligand>
</feature>
<feature type="binding site" evidence="1">
    <location>
        <position position="140"/>
    </location>
    <ligand>
        <name>NADP(+)</name>
        <dbReference type="ChEBI" id="CHEBI:58349"/>
    </ligand>
</feature>
<feature type="binding site" evidence="1">
    <location>
        <begin position="164"/>
        <end position="167"/>
    </location>
    <ligand>
        <name>NADP(+)</name>
        <dbReference type="ChEBI" id="CHEBI:58349"/>
    </ligand>
</feature>
<reference key="1">
    <citation type="journal article" date="2012" name="Med. Chem. Commun.">
        <title>Comparative analysis of the biosynthetic systems for fungal bicyclo[2.2.2]diazaoctane indole alkaloids: the (+)/(-)-notoamide, paraherquamide and malbrancheamide pathways.</title>
        <authorList>
            <person name="Li S."/>
            <person name="Anand K."/>
            <person name="Tran H."/>
            <person name="Yu F."/>
            <person name="Finefield J.M."/>
            <person name="Sunderhaus J.D."/>
            <person name="McAfoos T.J."/>
            <person name="Tsukamoto S."/>
            <person name="Williams R.M."/>
            <person name="Sherman D.H."/>
        </authorList>
    </citation>
    <scope>NUCLEOTIDE SEQUENCE [GENOMIC DNA]</scope>
    <scope>FUNCTION</scope>
    <source>
        <strain>NRRL 35600</strain>
    </source>
</reference>
<reference key="2">
    <citation type="journal article" date="2007" name="Angew. Chem. Int. Ed.">
        <title>Notoamides A-D: prenylated indole alkaloids isolated from a marine-derived fungus, Aspergillus sp.</title>
        <authorList>
            <person name="Kato H."/>
            <person name="Yoshida T."/>
            <person name="Tokue T."/>
            <person name="Nojiri Y."/>
            <person name="Hirota H."/>
            <person name="Ohta T."/>
            <person name="Williams R.M."/>
            <person name="Tsukamoto S."/>
        </authorList>
    </citation>
    <scope>BIOTECHNOLOGY</scope>
</reference>
<reference key="3">
    <citation type="journal article" date="2013" name="Appl. Microbiol. Biotechnol.">
        <title>Identification of a brevianamide F reverse prenyltransferase BrePT from Aspergillus versicolor with a broad substrate specificity towards tryptophan-containing cyclic dipeptides.</title>
        <authorList>
            <person name="Yin S."/>
            <person name="Yu X."/>
            <person name="Wang Q."/>
            <person name="Liu X.Q."/>
            <person name="Li S.M."/>
        </authorList>
    </citation>
    <scope>FUNCTION</scope>
</reference>
<keyword id="KW-0017">Alkaloid metabolism</keyword>
<keyword id="KW-0521">NADP</keyword>
<keyword id="KW-0560">Oxidoreductase</keyword>
<sequence length="357" mass="39737">MTNTNRRTITVYGATGAQGGPVVRSLLKNNAFKVRAITRKPESEAAKALADLGAEIVQGDGWKKEQMVAAFSGSWAAFVNTNSDDPCFWDANHPTEFDLGKIIIDGIIQAGTVKHLVYSSFVDTSSFTNGQAIIEAADEKSKIERYAASSGHFDTVCPLYQGWYMDVFRGQEYAHALGGFPYFEDEDKFRTLRLPRWGTHTDMPLPWISLEDDFGDIVHGIFLTPEDYNGRVVPTVSDIRTYPEMIDAFQSGMPSLFWFLVCRLTSVHALATGQKARYIPVTDWEAHFGDSHHGKESLAIFKFGKFTNGKYFGDEPISTDISATLKAKAAEAQGKDPSDRKLITLVEWFEKHVAPLL</sequence>
<name>NOTA_ASPVE</name>